<evidence type="ECO:0000255" key="1">
    <source>
        <dbReference type="HAMAP-Rule" id="MF_00105"/>
    </source>
</evidence>
<sequence length="160" mass="17526">MAEKTYPMTLAEKEKLEKELEELKLVRRPEVVERIKIARSYGDLSENSEYEAAKDEQAFVEGQISSLETKIRYAEIVDSDAVAKDEVGIGKTVTIQEVGETEKEVYIIVGSAGADAFAGKVSNESPIGQALIGKKKGDIATVETPVGSYDVKILKVEKTK</sequence>
<comment type="function">
    <text evidence="1">Necessary for efficient RNA polymerase transcription elongation past template-encoded arresting sites. The arresting sites in DNA have the property of trapping a certain fraction of elongating RNA polymerases that pass through, resulting in locked ternary complexes. Cleavage of the nascent transcript by cleavage factors such as GreA or GreB allows the resumption of elongation from the new 3'terminus. GreA releases sequences of 2 to 3 nucleotides.</text>
</comment>
<comment type="similarity">
    <text evidence="1">Belongs to the GreA/GreB family.</text>
</comment>
<dbReference type="EMBL" id="CP000725">
    <property type="protein sequence ID" value="ABV10285.1"/>
    <property type="molecule type" value="Genomic_DNA"/>
</dbReference>
<dbReference type="RefSeq" id="WP_008808523.1">
    <property type="nucleotide sequence ID" value="NC_009785.1"/>
</dbReference>
<dbReference type="SMR" id="A8AVM5"/>
<dbReference type="STRING" id="467705.SGO_0519"/>
<dbReference type="GeneID" id="93788325"/>
<dbReference type="KEGG" id="sgo:SGO_0519"/>
<dbReference type="eggNOG" id="COG0782">
    <property type="taxonomic scope" value="Bacteria"/>
</dbReference>
<dbReference type="HOGENOM" id="CLU_101379_2_1_9"/>
<dbReference type="Proteomes" id="UP000001131">
    <property type="component" value="Chromosome"/>
</dbReference>
<dbReference type="GO" id="GO:0003677">
    <property type="term" value="F:DNA binding"/>
    <property type="evidence" value="ECO:0007669"/>
    <property type="project" value="UniProtKB-UniRule"/>
</dbReference>
<dbReference type="GO" id="GO:0070063">
    <property type="term" value="F:RNA polymerase binding"/>
    <property type="evidence" value="ECO:0007669"/>
    <property type="project" value="InterPro"/>
</dbReference>
<dbReference type="GO" id="GO:0006354">
    <property type="term" value="P:DNA-templated transcription elongation"/>
    <property type="evidence" value="ECO:0007669"/>
    <property type="project" value="TreeGrafter"/>
</dbReference>
<dbReference type="GO" id="GO:0032784">
    <property type="term" value="P:regulation of DNA-templated transcription elongation"/>
    <property type="evidence" value="ECO:0007669"/>
    <property type="project" value="UniProtKB-UniRule"/>
</dbReference>
<dbReference type="FunFam" id="1.10.287.180:FF:000001">
    <property type="entry name" value="Transcription elongation factor GreA"/>
    <property type="match status" value="1"/>
</dbReference>
<dbReference type="FunFam" id="3.10.50.30:FF:000001">
    <property type="entry name" value="Transcription elongation factor GreA"/>
    <property type="match status" value="1"/>
</dbReference>
<dbReference type="Gene3D" id="3.10.50.30">
    <property type="entry name" value="Transcription elongation factor, GreA/GreB, C-terminal domain"/>
    <property type="match status" value="1"/>
</dbReference>
<dbReference type="Gene3D" id="1.10.287.180">
    <property type="entry name" value="Transcription elongation factor, GreA/GreB, N-terminal domain"/>
    <property type="match status" value="1"/>
</dbReference>
<dbReference type="HAMAP" id="MF_00105">
    <property type="entry name" value="GreA_GreB"/>
    <property type="match status" value="1"/>
</dbReference>
<dbReference type="InterPro" id="IPR036953">
    <property type="entry name" value="GreA/GreB_C_sf"/>
</dbReference>
<dbReference type="InterPro" id="IPR018151">
    <property type="entry name" value="TF_GreA/GreB_CS"/>
</dbReference>
<dbReference type="InterPro" id="IPR006359">
    <property type="entry name" value="Tscrpt_elong_fac_GreA"/>
</dbReference>
<dbReference type="InterPro" id="IPR028624">
    <property type="entry name" value="Tscrpt_elong_fac_GreA/B"/>
</dbReference>
<dbReference type="InterPro" id="IPR001437">
    <property type="entry name" value="Tscrpt_elong_fac_GreA/B_C"/>
</dbReference>
<dbReference type="InterPro" id="IPR023459">
    <property type="entry name" value="Tscrpt_elong_fac_GreA/B_fam"/>
</dbReference>
<dbReference type="InterPro" id="IPR022691">
    <property type="entry name" value="Tscrpt_elong_fac_GreA/B_N"/>
</dbReference>
<dbReference type="InterPro" id="IPR036805">
    <property type="entry name" value="Tscrpt_elong_fac_GreA/B_N_sf"/>
</dbReference>
<dbReference type="NCBIfam" id="TIGR01462">
    <property type="entry name" value="greA"/>
    <property type="match status" value="1"/>
</dbReference>
<dbReference type="NCBIfam" id="NF001260">
    <property type="entry name" value="PRK00226.1-1"/>
    <property type="match status" value="1"/>
</dbReference>
<dbReference type="NCBIfam" id="NF001263">
    <property type="entry name" value="PRK00226.1-4"/>
    <property type="match status" value="1"/>
</dbReference>
<dbReference type="PANTHER" id="PTHR30437">
    <property type="entry name" value="TRANSCRIPTION ELONGATION FACTOR GREA"/>
    <property type="match status" value="1"/>
</dbReference>
<dbReference type="PANTHER" id="PTHR30437:SF4">
    <property type="entry name" value="TRANSCRIPTION ELONGATION FACTOR GREA"/>
    <property type="match status" value="1"/>
</dbReference>
<dbReference type="Pfam" id="PF01272">
    <property type="entry name" value="GreA_GreB"/>
    <property type="match status" value="1"/>
</dbReference>
<dbReference type="Pfam" id="PF03449">
    <property type="entry name" value="GreA_GreB_N"/>
    <property type="match status" value="1"/>
</dbReference>
<dbReference type="PIRSF" id="PIRSF006092">
    <property type="entry name" value="GreA_GreB"/>
    <property type="match status" value="1"/>
</dbReference>
<dbReference type="SUPFAM" id="SSF54534">
    <property type="entry name" value="FKBP-like"/>
    <property type="match status" value="1"/>
</dbReference>
<dbReference type="SUPFAM" id="SSF46557">
    <property type="entry name" value="GreA transcript cleavage protein, N-terminal domain"/>
    <property type="match status" value="1"/>
</dbReference>
<dbReference type="PROSITE" id="PS00829">
    <property type="entry name" value="GREAB_1"/>
    <property type="match status" value="1"/>
</dbReference>
<dbReference type="PROSITE" id="PS00830">
    <property type="entry name" value="GREAB_2"/>
    <property type="match status" value="1"/>
</dbReference>
<proteinExistence type="inferred from homology"/>
<organism>
    <name type="scientific">Streptococcus gordonii (strain Challis / ATCC 35105 / BCRC 15272 / CH1 / DL1 / V288)</name>
    <dbReference type="NCBI Taxonomy" id="467705"/>
    <lineage>
        <taxon>Bacteria</taxon>
        <taxon>Bacillati</taxon>
        <taxon>Bacillota</taxon>
        <taxon>Bacilli</taxon>
        <taxon>Lactobacillales</taxon>
        <taxon>Streptococcaceae</taxon>
        <taxon>Streptococcus</taxon>
    </lineage>
</organism>
<keyword id="KW-0175">Coiled coil</keyword>
<keyword id="KW-0238">DNA-binding</keyword>
<keyword id="KW-1185">Reference proteome</keyword>
<keyword id="KW-0804">Transcription</keyword>
<keyword id="KW-0805">Transcription regulation</keyword>
<accession>A8AVM5</accession>
<name>GREA_STRGC</name>
<feature type="chain" id="PRO_1000075893" description="Transcription elongation factor GreA">
    <location>
        <begin position="1"/>
        <end position="160"/>
    </location>
</feature>
<feature type="coiled-coil region" evidence="1">
    <location>
        <begin position="1"/>
        <end position="72"/>
    </location>
</feature>
<protein>
    <recommendedName>
        <fullName evidence="1">Transcription elongation factor GreA</fullName>
    </recommendedName>
    <alternativeName>
        <fullName evidence="1">Transcript cleavage factor GreA</fullName>
    </alternativeName>
</protein>
<gene>
    <name evidence="1" type="primary">greA</name>
    <name type="ordered locus">SGO_0519</name>
</gene>
<reference key="1">
    <citation type="journal article" date="2007" name="J. Bacteriol.">
        <title>Genome-wide transcriptional changes in Streptococcus gordonii in response to competence signaling peptide.</title>
        <authorList>
            <person name="Vickerman M.M."/>
            <person name="Iobst S."/>
            <person name="Jesionowski A.M."/>
            <person name="Gill S.R."/>
        </authorList>
    </citation>
    <scope>NUCLEOTIDE SEQUENCE [LARGE SCALE GENOMIC DNA]</scope>
    <source>
        <strain>Challis / ATCC 35105 / BCRC 15272 / CH1 / DL1 / V288</strain>
    </source>
</reference>